<feature type="chain" id="PRO_1000214215" description="D-galactonate dehydratase">
    <location>
        <begin position="1"/>
        <end position="382"/>
    </location>
</feature>
<feature type="active site" description="Proton donor" evidence="1">
    <location>
        <position position="185"/>
    </location>
</feature>
<feature type="active site" description="Proton acceptor" evidence="1">
    <location>
        <position position="285"/>
    </location>
</feature>
<feature type="binding site" evidence="2">
    <location>
        <position position="183"/>
    </location>
    <ligand>
        <name>Mg(2+)</name>
        <dbReference type="ChEBI" id="CHEBI:18420"/>
    </ligand>
</feature>
<feature type="binding site" evidence="2">
    <location>
        <position position="209"/>
    </location>
    <ligand>
        <name>Mg(2+)</name>
        <dbReference type="ChEBI" id="CHEBI:18420"/>
    </ligand>
</feature>
<feature type="binding site" evidence="2">
    <location>
        <position position="235"/>
    </location>
    <ligand>
        <name>Mg(2+)</name>
        <dbReference type="ChEBI" id="CHEBI:18420"/>
    </ligand>
</feature>
<feature type="site" description="Increases basicity of active site His" evidence="2">
    <location>
        <position position="258"/>
    </location>
</feature>
<feature type="site" description="Transition state stabilizer" evidence="2">
    <location>
        <position position="310"/>
    </location>
</feature>
<reference key="1">
    <citation type="journal article" date="2009" name="J. Bacteriol.">
        <title>Genomic sequencing reveals regulatory mutations and recombinational events in the widely used MC4100 lineage of Escherichia coli K-12.</title>
        <authorList>
            <person name="Ferenci T."/>
            <person name="Zhou Z."/>
            <person name="Betteridge T."/>
            <person name="Ren Y."/>
            <person name="Liu Y."/>
            <person name="Feng L."/>
            <person name="Reeves P.R."/>
            <person name="Wang L."/>
        </authorList>
    </citation>
    <scope>NUCLEOTIDE SEQUENCE [LARGE SCALE GENOMIC DNA]</scope>
    <source>
        <strain>K12 / MC4100 / BW2952</strain>
    </source>
</reference>
<sequence>MKITKITTYRLPPRWMFLKIETDEGVVGWGEPVIEGRARTVEAAVHELGDYLIGQDPSRINDLWQVMYRAGFYRGGPILMSAIAGIDQALWDIKGKVLNAPVWQLMGGLVRDKIKAYSWVGGDRPADVIDGIKTLREIGFDTFKLNGCEELGLIDNSRAVDAAVNTVAQIREAFGNQIEFGLDFHGRVSAPMAKVLIKELEPYRPLFIEEPVLAEQAEYYPKLAAQTHIPLAAGERMFSRFDFKRVLEAGGISILQPDLSHAGGITECYKIAGMAEAYDVTLAPHCPLGPIALAACLHIDFVSYNAVLQEQSMGIHYNKGAELLDFVKNKEDFSMVGGFFKPLTKPGLGVEIDEAKVIEFSKNAPDWRNPLWRHEDNSVAEW</sequence>
<evidence type="ECO:0000250" key="1"/>
<evidence type="ECO:0000255" key="2">
    <source>
        <dbReference type="HAMAP-Rule" id="MF_01289"/>
    </source>
</evidence>
<comment type="function">
    <text evidence="2">Catalyzes the dehydration of D-galactonate to 2-keto-3-deoxy-D-galactonate.</text>
</comment>
<comment type="catalytic activity">
    <reaction evidence="2">
        <text>D-galactonate = 2-dehydro-3-deoxy-D-galactonate + H2O</text>
        <dbReference type="Rhea" id="RHEA:18649"/>
        <dbReference type="ChEBI" id="CHEBI:12931"/>
        <dbReference type="ChEBI" id="CHEBI:15377"/>
        <dbReference type="ChEBI" id="CHEBI:57989"/>
        <dbReference type="EC" id="4.2.1.6"/>
    </reaction>
</comment>
<comment type="cofactor">
    <cofactor evidence="2">
        <name>Mg(2+)</name>
        <dbReference type="ChEBI" id="CHEBI:18420"/>
    </cofactor>
    <text evidence="2">Binds 1 Mg(2+) ion per subunit.</text>
</comment>
<comment type="pathway">
    <text evidence="2">Carbohydrate acid metabolism; D-galactonate degradation; D-glyceraldehyde 3-phosphate and pyruvate from D-galactonate: step 1/3.</text>
</comment>
<comment type="miscellaneous">
    <text evidence="2">Reaction proceeds via an anti dehydration.</text>
</comment>
<comment type="similarity">
    <text evidence="2">Belongs to the mandelate racemase/muconate lactonizing enzyme family. GalD subfamily.</text>
</comment>
<dbReference type="EC" id="4.2.1.6" evidence="2"/>
<dbReference type="EMBL" id="CP001396">
    <property type="protein sequence ID" value="ACR63268.1"/>
    <property type="molecule type" value="Genomic_DNA"/>
</dbReference>
<dbReference type="RefSeq" id="WP_000705001.1">
    <property type="nucleotide sequence ID" value="NC_012759.1"/>
</dbReference>
<dbReference type="SMR" id="C4ZYW9"/>
<dbReference type="GeneID" id="75205406"/>
<dbReference type="KEGG" id="ebw:BWG_3382"/>
<dbReference type="HOGENOM" id="CLU_030273_3_2_6"/>
<dbReference type="UniPathway" id="UPA00081">
    <property type="reaction ID" value="UER00518"/>
</dbReference>
<dbReference type="GO" id="GO:0008869">
    <property type="term" value="F:galactonate dehydratase activity"/>
    <property type="evidence" value="ECO:0007669"/>
    <property type="project" value="UniProtKB-UniRule"/>
</dbReference>
<dbReference type="GO" id="GO:0000287">
    <property type="term" value="F:magnesium ion binding"/>
    <property type="evidence" value="ECO:0007669"/>
    <property type="project" value="UniProtKB-UniRule"/>
</dbReference>
<dbReference type="GO" id="GO:0009063">
    <property type="term" value="P:amino acid catabolic process"/>
    <property type="evidence" value="ECO:0007669"/>
    <property type="project" value="InterPro"/>
</dbReference>
<dbReference type="GO" id="GO:0034194">
    <property type="term" value="P:D-galactonate catabolic process"/>
    <property type="evidence" value="ECO:0007669"/>
    <property type="project" value="UniProtKB-UniRule"/>
</dbReference>
<dbReference type="CDD" id="cd03325">
    <property type="entry name" value="D-galactonate_dehydratase"/>
    <property type="match status" value="1"/>
</dbReference>
<dbReference type="FunFam" id="3.20.20.120:FF:000008">
    <property type="entry name" value="D-galactonate dehydratase"/>
    <property type="match status" value="1"/>
</dbReference>
<dbReference type="FunFam" id="3.30.390.10:FF:000003">
    <property type="entry name" value="D-galactonate dehydratase"/>
    <property type="match status" value="1"/>
</dbReference>
<dbReference type="Gene3D" id="3.20.20.120">
    <property type="entry name" value="Enolase-like C-terminal domain"/>
    <property type="match status" value="1"/>
</dbReference>
<dbReference type="Gene3D" id="3.30.390.10">
    <property type="entry name" value="Enolase-like, N-terminal domain"/>
    <property type="match status" value="1"/>
</dbReference>
<dbReference type="HAMAP" id="MF_01289">
    <property type="entry name" value="Galacton_dehydrat"/>
    <property type="match status" value="1"/>
</dbReference>
<dbReference type="InterPro" id="IPR034593">
    <property type="entry name" value="DgoD-like"/>
</dbReference>
<dbReference type="InterPro" id="IPR036849">
    <property type="entry name" value="Enolase-like_C_sf"/>
</dbReference>
<dbReference type="InterPro" id="IPR029017">
    <property type="entry name" value="Enolase-like_N"/>
</dbReference>
<dbReference type="InterPro" id="IPR029065">
    <property type="entry name" value="Enolase_C-like"/>
</dbReference>
<dbReference type="InterPro" id="IPR023592">
    <property type="entry name" value="Galactonate_deHydtase"/>
</dbReference>
<dbReference type="InterPro" id="IPR018110">
    <property type="entry name" value="Mandel_Rmase/mucon_lact_enz_CS"/>
</dbReference>
<dbReference type="InterPro" id="IPR013342">
    <property type="entry name" value="Mandelate_racemase_C"/>
</dbReference>
<dbReference type="InterPro" id="IPR013341">
    <property type="entry name" value="Mandelate_racemase_N_dom"/>
</dbReference>
<dbReference type="NCBIfam" id="NF010624">
    <property type="entry name" value="PRK14017.1"/>
    <property type="match status" value="1"/>
</dbReference>
<dbReference type="PANTHER" id="PTHR48080:SF2">
    <property type="entry name" value="D-GALACTONATE DEHYDRATASE"/>
    <property type="match status" value="1"/>
</dbReference>
<dbReference type="PANTHER" id="PTHR48080">
    <property type="entry name" value="D-GALACTONATE DEHYDRATASE-RELATED"/>
    <property type="match status" value="1"/>
</dbReference>
<dbReference type="Pfam" id="PF13378">
    <property type="entry name" value="MR_MLE_C"/>
    <property type="match status" value="1"/>
</dbReference>
<dbReference type="Pfam" id="PF02746">
    <property type="entry name" value="MR_MLE_N"/>
    <property type="match status" value="1"/>
</dbReference>
<dbReference type="SFLD" id="SFLDF00003">
    <property type="entry name" value="D-galactonate_dehydratase"/>
    <property type="match status" value="1"/>
</dbReference>
<dbReference type="SFLD" id="SFLDS00001">
    <property type="entry name" value="Enolase"/>
    <property type="match status" value="1"/>
</dbReference>
<dbReference type="SMART" id="SM00922">
    <property type="entry name" value="MR_MLE"/>
    <property type="match status" value="1"/>
</dbReference>
<dbReference type="SUPFAM" id="SSF51604">
    <property type="entry name" value="Enolase C-terminal domain-like"/>
    <property type="match status" value="1"/>
</dbReference>
<dbReference type="SUPFAM" id="SSF54826">
    <property type="entry name" value="Enolase N-terminal domain-like"/>
    <property type="match status" value="1"/>
</dbReference>
<dbReference type="PROSITE" id="PS00908">
    <property type="entry name" value="MR_MLE_1"/>
    <property type="match status" value="1"/>
</dbReference>
<dbReference type="PROSITE" id="PS00909">
    <property type="entry name" value="MR_MLE_2"/>
    <property type="match status" value="1"/>
</dbReference>
<protein>
    <recommendedName>
        <fullName evidence="2">D-galactonate dehydratase</fullName>
        <shortName evidence="2">GalD</shortName>
        <ecNumber evidence="2">4.2.1.6</ecNumber>
    </recommendedName>
</protein>
<name>DGOD_ECOBW</name>
<organism>
    <name type="scientific">Escherichia coli (strain K12 / MC4100 / BW2952)</name>
    <dbReference type="NCBI Taxonomy" id="595496"/>
    <lineage>
        <taxon>Bacteria</taxon>
        <taxon>Pseudomonadati</taxon>
        <taxon>Pseudomonadota</taxon>
        <taxon>Gammaproteobacteria</taxon>
        <taxon>Enterobacterales</taxon>
        <taxon>Enterobacteriaceae</taxon>
        <taxon>Escherichia</taxon>
    </lineage>
</organism>
<keyword id="KW-0456">Lyase</keyword>
<keyword id="KW-0460">Magnesium</keyword>
<keyword id="KW-0479">Metal-binding</keyword>
<accession>C4ZYW9</accession>
<proteinExistence type="inferred from homology"/>
<gene>
    <name evidence="2" type="primary">dgoD</name>
    <name type="ordered locus">BWG_3382</name>
</gene>